<keyword id="KW-0217">Developmental protein</keyword>
<keyword id="KW-0238">DNA-binding</keyword>
<keyword id="KW-0371">Homeobox</keyword>
<keyword id="KW-0539">Nucleus</keyword>
<keyword id="KW-1185">Reference proteome</keyword>
<keyword id="KW-0804">Transcription</keyword>
<keyword id="KW-0805">Transcription regulation</keyword>
<sequence>MEPGNYATLDGAKDIEGLLGAGGGRNLVSHSSPLASHPAAPTLMPTVNYAPLDLPGSAEPPKQCHPCPGVPQGASPAPVPYGYFGGGYYSCRVSRSSLKPCAQTAALATYPSETPAPGEEYPSRPTEFAFYPGYPGPYQPMASYLDVSVVQTLGAPGEPRHDSLLPVDSYQPWALAGGWNSQMCCQGEQNPPGPFWKAAFAEPSVQHPPPDGCAFRRGRKKRIPYSKGQLRELEREYAANKFITKDKRRKISAATSLSERQITIWFQNRRVKEKKVLAKVKTSTTP</sequence>
<gene>
    <name type="primary">Hoxb13</name>
</gene>
<accession>P70321</accession>
<accession>Q80Y12</accession>
<reference key="1">
    <citation type="journal article" date="1996" name="Development">
        <title>Hoxb-13: a new Hox gene in a distant region of the HOXB cluster maintains colinearity.</title>
        <authorList>
            <person name="Zeltser L.M."/>
            <person name="Desplan C."/>
            <person name="Heintz N."/>
        </authorList>
    </citation>
    <scope>NUCLEOTIDE SEQUENCE [MRNA]</scope>
</reference>
<reference key="2">
    <citation type="journal article" date="2004" name="Genome Res.">
        <title>The status, quality, and expansion of the NIH full-length cDNA project: the Mammalian Gene Collection (MGC).</title>
        <authorList>
            <consortium name="The MGC Project Team"/>
        </authorList>
    </citation>
    <scope>NUCLEOTIDE SEQUENCE [LARGE SCALE MRNA]</scope>
    <source>
        <strain>FVB/N</strain>
        <tissue>Colon</tissue>
    </source>
</reference>
<organism>
    <name type="scientific">Mus musculus</name>
    <name type="common">Mouse</name>
    <dbReference type="NCBI Taxonomy" id="10090"/>
    <lineage>
        <taxon>Eukaryota</taxon>
        <taxon>Metazoa</taxon>
        <taxon>Chordata</taxon>
        <taxon>Craniata</taxon>
        <taxon>Vertebrata</taxon>
        <taxon>Euteleostomi</taxon>
        <taxon>Mammalia</taxon>
        <taxon>Eutheria</taxon>
        <taxon>Euarchontoglires</taxon>
        <taxon>Glires</taxon>
        <taxon>Rodentia</taxon>
        <taxon>Myomorpha</taxon>
        <taxon>Muroidea</taxon>
        <taxon>Muridae</taxon>
        <taxon>Murinae</taxon>
        <taxon>Mus</taxon>
        <taxon>Mus</taxon>
    </lineage>
</organism>
<name>HXB13_MOUSE</name>
<proteinExistence type="evidence at transcript level"/>
<comment type="function">
    <text evidence="1">Sequence-specific transcription factor which is part of a developmental regulatory system that provides cells with specific positional identities on the anterior-posterior axis. Binds preferentially to methylated DNA (By similarity).</text>
</comment>
<comment type="subunit">
    <text evidence="1">Heterodimer with MEIS1 and MEIS2.</text>
</comment>
<comment type="subcellular location">
    <subcellularLocation>
        <location>Nucleus</location>
    </subcellularLocation>
</comment>
<comment type="tissue specificity">
    <text>Exhibits both spatial and temporal colinearity within the main body axis. At 12.5 dpc, is detected in hindgut, urogenital tract, spinal cord and tailbud. Not detected in secondary axes such as the limb and the genital tubercule.</text>
</comment>
<comment type="similarity">
    <text evidence="3">Belongs to the Abd-B homeobox family.</text>
</comment>
<dbReference type="EMBL" id="U57051">
    <property type="protein sequence ID" value="AAC52769.1"/>
    <property type="molecule type" value="mRNA"/>
</dbReference>
<dbReference type="EMBL" id="BC013639">
    <property type="protein sequence ID" value="AAH13639.1"/>
    <property type="molecule type" value="mRNA"/>
</dbReference>
<dbReference type="EMBL" id="BC051087">
    <property type="protein sequence ID" value="AAH51087.2"/>
    <property type="molecule type" value="mRNA"/>
</dbReference>
<dbReference type="EMBL" id="BC058813">
    <property type="protein sequence ID" value="AAH58813.1"/>
    <property type="molecule type" value="mRNA"/>
</dbReference>
<dbReference type="CCDS" id="CCDS25291.1"/>
<dbReference type="RefSeq" id="NP_032293.1">
    <property type="nucleotide sequence ID" value="NM_008267.4"/>
</dbReference>
<dbReference type="SMR" id="P70321"/>
<dbReference type="BioGRID" id="200376">
    <property type="interactions" value="4"/>
</dbReference>
<dbReference type="FunCoup" id="P70321">
    <property type="interactions" value="182"/>
</dbReference>
<dbReference type="IntAct" id="P70321">
    <property type="interactions" value="5"/>
</dbReference>
<dbReference type="STRING" id="10090.ENSMUSP00000056315"/>
<dbReference type="iPTMnet" id="P70321"/>
<dbReference type="PhosphoSitePlus" id="P70321"/>
<dbReference type="PaxDb" id="10090-ENSMUSP00000056315"/>
<dbReference type="ProteomicsDB" id="273229"/>
<dbReference type="Antibodypedia" id="3837">
    <property type="antibodies" value="259 antibodies from 28 providers"/>
</dbReference>
<dbReference type="DNASU" id="15408"/>
<dbReference type="Ensembl" id="ENSMUST00000062709.4">
    <property type="protein sequence ID" value="ENSMUSP00000056315.4"/>
    <property type="gene ID" value="ENSMUSG00000049604.4"/>
</dbReference>
<dbReference type="GeneID" id="15408"/>
<dbReference type="KEGG" id="mmu:15408"/>
<dbReference type="UCSC" id="uc007lbk.1">
    <property type="organism name" value="mouse"/>
</dbReference>
<dbReference type="AGR" id="MGI:107730"/>
<dbReference type="CTD" id="10481"/>
<dbReference type="MGI" id="MGI:107730">
    <property type="gene designation" value="Hoxb13"/>
</dbReference>
<dbReference type="VEuPathDB" id="HostDB:ENSMUSG00000049604"/>
<dbReference type="eggNOG" id="KOG0487">
    <property type="taxonomic scope" value="Eukaryota"/>
</dbReference>
<dbReference type="GeneTree" id="ENSGT00940000159029"/>
<dbReference type="HOGENOM" id="CLU_059940_1_0_1"/>
<dbReference type="InParanoid" id="P70321"/>
<dbReference type="OMA" id="HPPDGCA"/>
<dbReference type="OrthoDB" id="6159439at2759"/>
<dbReference type="PhylomeDB" id="P70321"/>
<dbReference type="TreeFam" id="TF330813"/>
<dbReference type="BioGRID-ORCS" id="15408">
    <property type="hits" value="1 hit in 80 CRISPR screens"/>
</dbReference>
<dbReference type="PRO" id="PR:P70321"/>
<dbReference type="Proteomes" id="UP000000589">
    <property type="component" value="Chromosome 11"/>
</dbReference>
<dbReference type="RNAct" id="P70321">
    <property type="molecule type" value="protein"/>
</dbReference>
<dbReference type="Bgee" id="ENSMUSG00000049604">
    <property type="expression patterns" value="Expressed in prostate gland ventral lobe and 38 other cell types or tissues"/>
</dbReference>
<dbReference type="GO" id="GO:0005654">
    <property type="term" value="C:nucleoplasm"/>
    <property type="evidence" value="ECO:0007669"/>
    <property type="project" value="Ensembl"/>
</dbReference>
<dbReference type="GO" id="GO:0005667">
    <property type="term" value="C:transcription regulator complex"/>
    <property type="evidence" value="ECO:0000314"/>
    <property type="project" value="MGI"/>
</dbReference>
<dbReference type="GO" id="GO:0001227">
    <property type="term" value="F:DNA-binding transcription repressor activity, RNA polymerase II-specific"/>
    <property type="evidence" value="ECO:0007669"/>
    <property type="project" value="Ensembl"/>
</dbReference>
<dbReference type="GO" id="GO:0008327">
    <property type="term" value="F:methyl-CpG binding"/>
    <property type="evidence" value="ECO:0000250"/>
    <property type="project" value="UniProtKB"/>
</dbReference>
<dbReference type="GO" id="GO:1990837">
    <property type="term" value="F:sequence-specific double-stranded DNA binding"/>
    <property type="evidence" value="ECO:0007669"/>
    <property type="project" value="Ensembl"/>
</dbReference>
<dbReference type="GO" id="GO:0001525">
    <property type="term" value="P:angiogenesis"/>
    <property type="evidence" value="ECO:0007669"/>
    <property type="project" value="Ensembl"/>
</dbReference>
<dbReference type="GO" id="GO:0060743">
    <property type="term" value="P:epithelial cell maturation involved in prostate gland development"/>
    <property type="evidence" value="ECO:0000315"/>
    <property type="project" value="MGI"/>
</dbReference>
<dbReference type="GO" id="GO:0002009">
    <property type="term" value="P:morphogenesis of an epithelium"/>
    <property type="evidence" value="ECO:0000315"/>
    <property type="project" value="MGI"/>
</dbReference>
<dbReference type="GO" id="GO:0060527">
    <property type="term" value="P:prostate epithelial cord arborization involved in prostate glandular acinus morphogenesis"/>
    <property type="evidence" value="ECO:0000316"/>
    <property type="project" value="MGI"/>
</dbReference>
<dbReference type="GO" id="GO:0040008">
    <property type="term" value="P:regulation of growth"/>
    <property type="evidence" value="ECO:0000315"/>
    <property type="project" value="MGI"/>
</dbReference>
<dbReference type="GO" id="GO:0033574">
    <property type="term" value="P:response to testosterone"/>
    <property type="evidence" value="ECO:0007669"/>
    <property type="project" value="Ensembl"/>
</dbReference>
<dbReference type="CDD" id="cd00086">
    <property type="entry name" value="homeodomain"/>
    <property type="match status" value="1"/>
</dbReference>
<dbReference type="FunFam" id="1.10.10.60:FF:000084">
    <property type="entry name" value="Homeobox protein Hox-D13"/>
    <property type="match status" value="1"/>
</dbReference>
<dbReference type="Gene3D" id="1.10.10.60">
    <property type="entry name" value="Homeodomain-like"/>
    <property type="match status" value="1"/>
</dbReference>
<dbReference type="InterPro" id="IPR051003">
    <property type="entry name" value="AP_axis_regulatory_Homeobox"/>
</dbReference>
<dbReference type="InterPro" id="IPR001356">
    <property type="entry name" value="HD"/>
</dbReference>
<dbReference type="InterPro" id="IPR017970">
    <property type="entry name" value="Homeobox_CS"/>
</dbReference>
<dbReference type="InterPro" id="IPR009057">
    <property type="entry name" value="Homeodomain-like_sf"/>
</dbReference>
<dbReference type="InterPro" id="IPR022067">
    <property type="entry name" value="HoxA13_N"/>
</dbReference>
<dbReference type="PANTHER" id="PTHR45804:SF6">
    <property type="entry name" value="HOMEOBOX PROTEIN HOX-B13"/>
    <property type="match status" value="1"/>
</dbReference>
<dbReference type="PANTHER" id="PTHR45804">
    <property type="entry name" value="SEGMENTATION PROTEIN FUSHI TARAZU-LIKE PROTEIN"/>
    <property type="match status" value="1"/>
</dbReference>
<dbReference type="Pfam" id="PF00046">
    <property type="entry name" value="Homeodomain"/>
    <property type="match status" value="1"/>
</dbReference>
<dbReference type="Pfam" id="PF12284">
    <property type="entry name" value="HoxA13_N"/>
    <property type="match status" value="1"/>
</dbReference>
<dbReference type="SMART" id="SM00389">
    <property type="entry name" value="HOX"/>
    <property type="match status" value="1"/>
</dbReference>
<dbReference type="SUPFAM" id="SSF46689">
    <property type="entry name" value="Homeodomain-like"/>
    <property type="match status" value="1"/>
</dbReference>
<dbReference type="PROSITE" id="PS00027">
    <property type="entry name" value="HOMEOBOX_1"/>
    <property type="match status" value="1"/>
</dbReference>
<dbReference type="PROSITE" id="PS50071">
    <property type="entry name" value="HOMEOBOX_2"/>
    <property type="match status" value="1"/>
</dbReference>
<feature type="chain" id="PRO_0000200161" description="Homeobox protein Hox-B13">
    <location>
        <begin position="1"/>
        <end position="286"/>
    </location>
</feature>
<feature type="DNA-binding region" description="Homeobox" evidence="2">
    <location>
        <begin position="218"/>
        <end position="277"/>
    </location>
</feature>
<feature type="region of interest" description="Interaction with DNA" evidence="1">
    <location>
        <begin position="219"/>
        <end position="248"/>
    </location>
</feature>
<feature type="region of interest" description="Interaction with 5-mCpG DNA" evidence="1">
    <location>
        <begin position="260"/>
        <end position="275"/>
    </location>
</feature>
<feature type="region of interest" description="Interaction with DNA" evidence="1">
    <location>
        <begin position="272"/>
        <end position="275"/>
    </location>
</feature>
<protein>
    <recommendedName>
        <fullName>Homeobox protein Hox-B13</fullName>
    </recommendedName>
</protein>
<evidence type="ECO:0000250" key="1">
    <source>
        <dbReference type="UniProtKB" id="Q92826"/>
    </source>
</evidence>
<evidence type="ECO:0000255" key="2">
    <source>
        <dbReference type="PROSITE-ProRule" id="PRU00108"/>
    </source>
</evidence>
<evidence type="ECO:0000305" key="3"/>